<dbReference type="EC" id="2.7.8.7" evidence="1"/>
<dbReference type="EMBL" id="CP001063">
    <property type="protein sequence ID" value="ACD06804.1"/>
    <property type="molecule type" value="Genomic_DNA"/>
</dbReference>
<dbReference type="RefSeq" id="WP_000986029.1">
    <property type="nucleotide sequence ID" value="NC_010658.1"/>
</dbReference>
<dbReference type="SMR" id="B2TXX6"/>
<dbReference type="STRING" id="344609.SbBS512_E2928"/>
<dbReference type="GeneID" id="93774528"/>
<dbReference type="KEGG" id="sbc:SbBS512_E2928"/>
<dbReference type="HOGENOM" id="CLU_089696_3_1_6"/>
<dbReference type="Proteomes" id="UP000001030">
    <property type="component" value="Chromosome"/>
</dbReference>
<dbReference type="GO" id="GO:0005737">
    <property type="term" value="C:cytoplasm"/>
    <property type="evidence" value="ECO:0007669"/>
    <property type="project" value="UniProtKB-SubCell"/>
</dbReference>
<dbReference type="GO" id="GO:0008897">
    <property type="term" value="F:holo-[acyl-carrier-protein] synthase activity"/>
    <property type="evidence" value="ECO:0007669"/>
    <property type="project" value="UniProtKB-UniRule"/>
</dbReference>
<dbReference type="GO" id="GO:0000287">
    <property type="term" value="F:magnesium ion binding"/>
    <property type="evidence" value="ECO:0007669"/>
    <property type="project" value="UniProtKB-UniRule"/>
</dbReference>
<dbReference type="GO" id="GO:0006633">
    <property type="term" value="P:fatty acid biosynthetic process"/>
    <property type="evidence" value="ECO:0007669"/>
    <property type="project" value="UniProtKB-UniRule"/>
</dbReference>
<dbReference type="FunFam" id="3.90.470.20:FF:000001">
    <property type="entry name" value="Holo-[acyl-carrier-protein] synthase"/>
    <property type="match status" value="1"/>
</dbReference>
<dbReference type="Gene3D" id="3.90.470.20">
    <property type="entry name" value="4'-phosphopantetheinyl transferase domain"/>
    <property type="match status" value="1"/>
</dbReference>
<dbReference type="HAMAP" id="MF_00101">
    <property type="entry name" value="AcpS"/>
    <property type="match status" value="1"/>
</dbReference>
<dbReference type="InterPro" id="IPR008278">
    <property type="entry name" value="4-PPantetheinyl_Trfase_dom"/>
</dbReference>
<dbReference type="InterPro" id="IPR037143">
    <property type="entry name" value="4-PPantetheinyl_Trfase_dom_sf"/>
</dbReference>
<dbReference type="InterPro" id="IPR002582">
    <property type="entry name" value="ACPS"/>
</dbReference>
<dbReference type="InterPro" id="IPR004568">
    <property type="entry name" value="Ppantetheine-prot_Trfase_dom"/>
</dbReference>
<dbReference type="NCBIfam" id="TIGR00516">
    <property type="entry name" value="acpS"/>
    <property type="match status" value="1"/>
</dbReference>
<dbReference type="NCBIfam" id="TIGR00556">
    <property type="entry name" value="pantethn_trn"/>
    <property type="match status" value="1"/>
</dbReference>
<dbReference type="Pfam" id="PF01648">
    <property type="entry name" value="ACPS"/>
    <property type="match status" value="1"/>
</dbReference>
<dbReference type="SUPFAM" id="SSF56214">
    <property type="entry name" value="4'-phosphopantetheinyl transferase"/>
    <property type="match status" value="1"/>
</dbReference>
<name>ACPS_SHIB3</name>
<evidence type="ECO:0000255" key="1">
    <source>
        <dbReference type="HAMAP-Rule" id="MF_00101"/>
    </source>
</evidence>
<keyword id="KW-0963">Cytoplasm</keyword>
<keyword id="KW-0275">Fatty acid biosynthesis</keyword>
<keyword id="KW-0276">Fatty acid metabolism</keyword>
<keyword id="KW-0444">Lipid biosynthesis</keyword>
<keyword id="KW-0443">Lipid metabolism</keyword>
<keyword id="KW-0460">Magnesium</keyword>
<keyword id="KW-0479">Metal-binding</keyword>
<keyword id="KW-1185">Reference proteome</keyword>
<keyword id="KW-0808">Transferase</keyword>
<gene>
    <name evidence="1" type="primary">acpS</name>
    <name type="ordered locus">SbBS512_E2928</name>
</gene>
<sequence length="126" mass="14094">MAILGLGTDIVEIARIEAVIARSGERLARRVLSDNEWAIWKTHHQPVRFLAKRFAVKEAAAKAFGTGIRNGLAFNQFEVFNDELGKPRLRLWGEALKLAEKLGVVNMHVTLADERHYACATVIIES</sequence>
<accession>B2TXX6</accession>
<proteinExistence type="inferred from homology"/>
<protein>
    <recommendedName>
        <fullName evidence="1">Holo-[acyl-carrier-protein] synthase</fullName>
        <shortName evidence="1">Holo-ACP synthase</shortName>
        <ecNumber evidence="1">2.7.8.7</ecNumber>
    </recommendedName>
    <alternativeName>
        <fullName evidence="1">4'-phosphopantetheinyl transferase AcpS</fullName>
    </alternativeName>
</protein>
<reference key="1">
    <citation type="submission" date="2008-05" db="EMBL/GenBank/DDBJ databases">
        <title>Complete sequence of Shigella boydii serotype 18 strain BS512.</title>
        <authorList>
            <person name="Rasko D.A."/>
            <person name="Rosovitz M."/>
            <person name="Maurelli A.T."/>
            <person name="Myers G."/>
            <person name="Seshadri R."/>
            <person name="Cer R."/>
            <person name="Jiang L."/>
            <person name="Ravel J."/>
            <person name="Sebastian Y."/>
        </authorList>
    </citation>
    <scope>NUCLEOTIDE SEQUENCE [LARGE SCALE GENOMIC DNA]</scope>
    <source>
        <strain>CDC 3083-94 / BS512</strain>
    </source>
</reference>
<feature type="chain" id="PRO_1000093919" description="Holo-[acyl-carrier-protein] synthase">
    <location>
        <begin position="1"/>
        <end position="126"/>
    </location>
</feature>
<feature type="binding site" evidence="1">
    <location>
        <position position="9"/>
    </location>
    <ligand>
        <name>Mg(2+)</name>
        <dbReference type="ChEBI" id="CHEBI:18420"/>
    </ligand>
</feature>
<feature type="binding site" evidence="1">
    <location>
        <position position="58"/>
    </location>
    <ligand>
        <name>Mg(2+)</name>
        <dbReference type="ChEBI" id="CHEBI:18420"/>
    </ligand>
</feature>
<organism>
    <name type="scientific">Shigella boydii serotype 18 (strain CDC 3083-94 / BS512)</name>
    <dbReference type="NCBI Taxonomy" id="344609"/>
    <lineage>
        <taxon>Bacteria</taxon>
        <taxon>Pseudomonadati</taxon>
        <taxon>Pseudomonadota</taxon>
        <taxon>Gammaproteobacteria</taxon>
        <taxon>Enterobacterales</taxon>
        <taxon>Enterobacteriaceae</taxon>
        <taxon>Shigella</taxon>
    </lineage>
</organism>
<comment type="function">
    <text evidence="1">Transfers the 4'-phosphopantetheine moiety from coenzyme A to a Ser of acyl-carrier-protein.</text>
</comment>
<comment type="catalytic activity">
    <reaction evidence="1">
        <text>apo-[ACP] + CoA = holo-[ACP] + adenosine 3',5'-bisphosphate + H(+)</text>
        <dbReference type="Rhea" id="RHEA:12068"/>
        <dbReference type="Rhea" id="RHEA-COMP:9685"/>
        <dbReference type="Rhea" id="RHEA-COMP:9690"/>
        <dbReference type="ChEBI" id="CHEBI:15378"/>
        <dbReference type="ChEBI" id="CHEBI:29999"/>
        <dbReference type="ChEBI" id="CHEBI:57287"/>
        <dbReference type="ChEBI" id="CHEBI:58343"/>
        <dbReference type="ChEBI" id="CHEBI:64479"/>
        <dbReference type="EC" id="2.7.8.7"/>
    </reaction>
</comment>
<comment type="cofactor">
    <cofactor evidence="1">
        <name>Mg(2+)</name>
        <dbReference type="ChEBI" id="CHEBI:18420"/>
    </cofactor>
</comment>
<comment type="subcellular location">
    <subcellularLocation>
        <location evidence="1">Cytoplasm</location>
    </subcellularLocation>
</comment>
<comment type="similarity">
    <text evidence="1">Belongs to the P-Pant transferase superfamily. AcpS family.</text>
</comment>